<accession>Q1LR36</accession>
<protein>
    <recommendedName>
        <fullName evidence="1">Phosphoribosylaminoimidazole-succinocarboxamide synthase</fullName>
        <ecNumber evidence="1">6.3.2.6</ecNumber>
    </recommendedName>
    <alternativeName>
        <fullName evidence="1">SAICAR synthetase</fullName>
    </alternativeName>
</protein>
<feature type="chain" id="PRO_1000018767" description="Phosphoribosylaminoimidazole-succinocarboxamide synthase">
    <location>
        <begin position="1"/>
        <end position="302"/>
    </location>
</feature>
<proteinExistence type="inferred from homology"/>
<reference key="1">
    <citation type="journal article" date="2010" name="PLoS ONE">
        <title>The complete genome sequence of Cupriavidus metallidurans strain CH34, a master survivalist in harsh and anthropogenic environments.</title>
        <authorList>
            <person name="Janssen P.J."/>
            <person name="Van Houdt R."/>
            <person name="Moors H."/>
            <person name="Monsieurs P."/>
            <person name="Morin N."/>
            <person name="Michaux A."/>
            <person name="Benotmane M.A."/>
            <person name="Leys N."/>
            <person name="Vallaeys T."/>
            <person name="Lapidus A."/>
            <person name="Monchy S."/>
            <person name="Medigue C."/>
            <person name="Taghavi S."/>
            <person name="McCorkle S."/>
            <person name="Dunn J."/>
            <person name="van der Lelie D."/>
            <person name="Mergeay M."/>
        </authorList>
    </citation>
    <scope>NUCLEOTIDE SEQUENCE [LARGE SCALE GENOMIC DNA]</scope>
    <source>
        <strain>ATCC 43123 / DSM 2839 / NBRC 102507 / CH34</strain>
    </source>
</reference>
<name>PUR7_CUPMC</name>
<dbReference type="EC" id="6.3.2.6" evidence="1"/>
<dbReference type="EMBL" id="CP000352">
    <property type="protein sequence ID" value="ABF07390.1"/>
    <property type="molecule type" value="Genomic_DNA"/>
</dbReference>
<dbReference type="RefSeq" id="WP_008652147.1">
    <property type="nucleotide sequence ID" value="NC_007973.1"/>
</dbReference>
<dbReference type="SMR" id="Q1LR36"/>
<dbReference type="STRING" id="266264.Rmet_0504"/>
<dbReference type="KEGG" id="rme:Rmet_0504"/>
<dbReference type="eggNOG" id="COG0152">
    <property type="taxonomic scope" value="Bacteria"/>
</dbReference>
<dbReference type="HOGENOM" id="CLU_045637_0_0_4"/>
<dbReference type="UniPathway" id="UPA00074">
    <property type="reaction ID" value="UER00131"/>
</dbReference>
<dbReference type="Proteomes" id="UP000002429">
    <property type="component" value="Chromosome"/>
</dbReference>
<dbReference type="GO" id="GO:0005737">
    <property type="term" value="C:cytoplasm"/>
    <property type="evidence" value="ECO:0007669"/>
    <property type="project" value="TreeGrafter"/>
</dbReference>
<dbReference type="GO" id="GO:0005524">
    <property type="term" value="F:ATP binding"/>
    <property type="evidence" value="ECO:0007669"/>
    <property type="project" value="UniProtKB-KW"/>
</dbReference>
<dbReference type="GO" id="GO:0004639">
    <property type="term" value="F:phosphoribosylaminoimidazolesuccinocarboxamide synthase activity"/>
    <property type="evidence" value="ECO:0007669"/>
    <property type="project" value="UniProtKB-UniRule"/>
</dbReference>
<dbReference type="GO" id="GO:0006189">
    <property type="term" value="P:'de novo' IMP biosynthetic process"/>
    <property type="evidence" value="ECO:0007669"/>
    <property type="project" value="UniProtKB-UniRule"/>
</dbReference>
<dbReference type="CDD" id="cd01414">
    <property type="entry name" value="SAICAR_synt_Sc"/>
    <property type="match status" value="1"/>
</dbReference>
<dbReference type="FunFam" id="3.30.470.20:FF:000015">
    <property type="entry name" value="Phosphoribosylaminoimidazole-succinocarboxamide synthase"/>
    <property type="match status" value="1"/>
</dbReference>
<dbReference type="Gene3D" id="3.30.470.20">
    <property type="entry name" value="ATP-grasp fold, B domain"/>
    <property type="match status" value="1"/>
</dbReference>
<dbReference type="Gene3D" id="3.30.200.20">
    <property type="entry name" value="Phosphorylase Kinase, domain 1"/>
    <property type="match status" value="1"/>
</dbReference>
<dbReference type="HAMAP" id="MF_00137">
    <property type="entry name" value="SAICAR_synth"/>
    <property type="match status" value="1"/>
</dbReference>
<dbReference type="InterPro" id="IPR028923">
    <property type="entry name" value="SAICAR_synt/ADE2_N"/>
</dbReference>
<dbReference type="InterPro" id="IPR001636">
    <property type="entry name" value="SAICAR_synth"/>
</dbReference>
<dbReference type="InterPro" id="IPR018236">
    <property type="entry name" value="SAICAR_synthetase_CS"/>
</dbReference>
<dbReference type="NCBIfam" id="NF010568">
    <property type="entry name" value="PRK13961.1"/>
    <property type="match status" value="1"/>
</dbReference>
<dbReference type="NCBIfam" id="TIGR00081">
    <property type="entry name" value="purC"/>
    <property type="match status" value="1"/>
</dbReference>
<dbReference type="PANTHER" id="PTHR43700">
    <property type="entry name" value="PHOSPHORIBOSYLAMINOIMIDAZOLE-SUCCINOCARBOXAMIDE SYNTHASE"/>
    <property type="match status" value="1"/>
</dbReference>
<dbReference type="PANTHER" id="PTHR43700:SF1">
    <property type="entry name" value="PHOSPHORIBOSYLAMINOIMIDAZOLE-SUCCINOCARBOXAMIDE SYNTHASE"/>
    <property type="match status" value="1"/>
</dbReference>
<dbReference type="Pfam" id="PF01259">
    <property type="entry name" value="SAICAR_synt"/>
    <property type="match status" value="1"/>
</dbReference>
<dbReference type="SUPFAM" id="SSF56104">
    <property type="entry name" value="SAICAR synthase-like"/>
    <property type="match status" value="1"/>
</dbReference>
<dbReference type="PROSITE" id="PS01057">
    <property type="entry name" value="SAICAR_SYNTHETASE_1"/>
    <property type="match status" value="1"/>
</dbReference>
<dbReference type="PROSITE" id="PS01058">
    <property type="entry name" value="SAICAR_SYNTHETASE_2"/>
    <property type="match status" value="1"/>
</dbReference>
<sequence>MSDALYESSIQSLPLLGKGKVRDNYAVGDDKLLIVTTDRLSAFDVILGEPIPAKGRVLNQMANFWFKKLAHIVPNHETDVTAESVVAPNEVEQVKGRAVVVKRLKPILVEAVVRGYLAGSGWKDYQATGKVCGIALPAGLQNAQKLPEPIFTPAAKAEMGEHDENISFDEVEARIGKELAAKMRDISIRLYKEAADYAATRGIIIADTKFEFGLDENGTLTLMDEVLTADSSRFWPADSYQVGTNPPSFDKQFVRDWLEAVRIDGKPWPKTAPAPKLPEDVVQKTADKYKEALTRLTGEALQ</sequence>
<evidence type="ECO:0000255" key="1">
    <source>
        <dbReference type="HAMAP-Rule" id="MF_00137"/>
    </source>
</evidence>
<keyword id="KW-0067">ATP-binding</keyword>
<keyword id="KW-0436">Ligase</keyword>
<keyword id="KW-0547">Nucleotide-binding</keyword>
<keyword id="KW-0658">Purine biosynthesis</keyword>
<keyword id="KW-1185">Reference proteome</keyword>
<comment type="catalytic activity">
    <reaction evidence="1">
        <text>5-amino-1-(5-phospho-D-ribosyl)imidazole-4-carboxylate + L-aspartate + ATP = (2S)-2-[5-amino-1-(5-phospho-beta-D-ribosyl)imidazole-4-carboxamido]succinate + ADP + phosphate + 2 H(+)</text>
        <dbReference type="Rhea" id="RHEA:22628"/>
        <dbReference type="ChEBI" id="CHEBI:15378"/>
        <dbReference type="ChEBI" id="CHEBI:29991"/>
        <dbReference type="ChEBI" id="CHEBI:30616"/>
        <dbReference type="ChEBI" id="CHEBI:43474"/>
        <dbReference type="ChEBI" id="CHEBI:58443"/>
        <dbReference type="ChEBI" id="CHEBI:77657"/>
        <dbReference type="ChEBI" id="CHEBI:456216"/>
        <dbReference type="EC" id="6.3.2.6"/>
    </reaction>
</comment>
<comment type="pathway">
    <text evidence="1">Purine metabolism; IMP biosynthesis via de novo pathway; 5-amino-1-(5-phospho-D-ribosyl)imidazole-4-carboxamide from 5-amino-1-(5-phospho-D-ribosyl)imidazole-4-carboxylate: step 1/2.</text>
</comment>
<comment type="similarity">
    <text evidence="1">Belongs to the SAICAR synthetase family.</text>
</comment>
<gene>
    <name evidence="1" type="primary">purC</name>
    <name type="ordered locus">Rmet_0504</name>
</gene>
<organism>
    <name type="scientific">Cupriavidus metallidurans (strain ATCC 43123 / DSM 2839 / NBRC 102507 / CH34)</name>
    <name type="common">Ralstonia metallidurans</name>
    <dbReference type="NCBI Taxonomy" id="266264"/>
    <lineage>
        <taxon>Bacteria</taxon>
        <taxon>Pseudomonadati</taxon>
        <taxon>Pseudomonadota</taxon>
        <taxon>Betaproteobacteria</taxon>
        <taxon>Burkholderiales</taxon>
        <taxon>Burkholderiaceae</taxon>
        <taxon>Cupriavidus</taxon>
    </lineage>
</organism>